<accession>Q7TYM1</accession>
<accession>A0A1R3Y158</accession>
<accession>X2BKM6</accession>
<comment type="function">
    <text evidence="2">Catalyzes the reversible adenylation of nicotinate mononucleotide (NaMN) to nicotinic acid adenine dinucleotide (NaAD).</text>
</comment>
<comment type="catalytic activity">
    <reaction evidence="2">
        <text>nicotinate beta-D-ribonucleotide + ATP + H(+) = deamido-NAD(+) + diphosphate</text>
        <dbReference type="Rhea" id="RHEA:22860"/>
        <dbReference type="ChEBI" id="CHEBI:15378"/>
        <dbReference type="ChEBI" id="CHEBI:30616"/>
        <dbReference type="ChEBI" id="CHEBI:33019"/>
        <dbReference type="ChEBI" id="CHEBI:57502"/>
        <dbReference type="ChEBI" id="CHEBI:58437"/>
        <dbReference type="EC" id="2.7.7.18"/>
    </reaction>
</comment>
<comment type="pathway">
    <text evidence="2">Cofactor biosynthesis; NAD(+) biosynthesis; deamido-NAD(+) from nicotinate D-ribonucleotide: step 1/1.</text>
</comment>
<comment type="similarity">
    <text evidence="2">Belongs to the NadD family.</text>
</comment>
<comment type="sequence caution" evidence="1">
    <conflict type="erroneous initiation">
        <sequence resource="EMBL-CDS" id="SIU01059"/>
    </conflict>
    <text>Truncated N-terminus.</text>
</comment>
<keyword id="KW-0067">ATP-binding</keyword>
<keyword id="KW-0520">NAD</keyword>
<keyword id="KW-0547">Nucleotide-binding</keyword>
<keyword id="KW-0548">Nucleotidyltransferase</keyword>
<keyword id="KW-0662">Pyridine nucleotide biosynthesis</keyword>
<keyword id="KW-1185">Reference proteome</keyword>
<keyword id="KW-0808">Transferase</keyword>
<gene>
    <name evidence="2" type="primary">nadD</name>
    <name type="ordered locus">BQ2027_MB2444C</name>
</gene>
<sequence length="214" mass="23370">MGVMGGTFDPIHYGHLVAASEVADLFDLDEVVFVPSGQPWQKGRQVSAAEHRYLMTVIATASNPRFSVSRVDIDRGGPTYTKDTLADLHALHPDSELYFTTGADALASIMSWQGWEELFELARFVGVSRPGYELRNEHITSLLGQLAKDALTLVEIPALAISSTDCRQRAEQSRPLWYLMPDSVVQYVSKCRLYCGACDAGARSTTSLAAGNGL</sequence>
<organism>
    <name type="scientific">Mycobacterium bovis (strain ATCC BAA-935 / AF2122/97)</name>
    <dbReference type="NCBI Taxonomy" id="233413"/>
    <lineage>
        <taxon>Bacteria</taxon>
        <taxon>Bacillati</taxon>
        <taxon>Actinomycetota</taxon>
        <taxon>Actinomycetes</taxon>
        <taxon>Mycobacteriales</taxon>
        <taxon>Mycobacteriaceae</taxon>
        <taxon>Mycobacterium</taxon>
        <taxon>Mycobacterium tuberculosis complex</taxon>
    </lineage>
</organism>
<reference key="1">
    <citation type="journal article" date="2003" name="Proc. Natl. Acad. Sci. U.S.A.">
        <title>The complete genome sequence of Mycobacterium bovis.</title>
        <authorList>
            <person name="Garnier T."/>
            <person name="Eiglmeier K."/>
            <person name="Camus J.-C."/>
            <person name="Medina N."/>
            <person name="Mansoor H."/>
            <person name="Pryor M."/>
            <person name="Duthoy S."/>
            <person name="Grondin S."/>
            <person name="Lacroix C."/>
            <person name="Monsempe C."/>
            <person name="Simon S."/>
            <person name="Harris B."/>
            <person name="Atkin R."/>
            <person name="Doggett J."/>
            <person name="Mayes R."/>
            <person name="Keating L."/>
            <person name="Wheeler P.R."/>
            <person name="Parkhill J."/>
            <person name="Barrell B.G."/>
            <person name="Cole S.T."/>
            <person name="Gordon S.V."/>
            <person name="Hewinson R.G."/>
        </authorList>
    </citation>
    <scope>NUCLEOTIDE SEQUENCE [LARGE SCALE GENOMIC DNA]</scope>
    <source>
        <strain>ATCC BAA-935 / AF2122/97</strain>
    </source>
</reference>
<reference key="2">
    <citation type="journal article" date="2017" name="Genome Announc.">
        <title>Updated reference genome sequence and annotation of Mycobacterium bovis AF2122/97.</title>
        <authorList>
            <person name="Malone K.M."/>
            <person name="Farrell D."/>
            <person name="Stuber T.P."/>
            <person name="Schubert O.T."/>
            <person name="Aebersold R."/>
            <person name="Robbe-Austerman S."/>
            <person name="Gordon S.V."/>
        </authorList>
    </citation>
    <scope>NUCLEOTIDE SEQUENCE [LARGE SCALE GENOMIC DNA]</scope>
    <scope>GENOME REANNOTATION</scope>
    <source>
        <strain>ATCC BAA-935 / AF2122/97</strain>
    </source>
</reference>
<name>NADD_MYCBO</name>
<dbReference type="EC" id="2.7.7.18" evidence="2"/>
<dbReference type="EMBL" id="LT708304">
    <property type="protein sequence ID" value="SIU01059.1"/>
    <property type="status" value="ALT_INIT"/>
    <property type="molecule type" value="Genomic_DNA"/>
</dbReference>
<dbReference type="RefSeq" id="NP_856093.1">
    <property type="nucleotide sequence ID" value="NC_002945.3"/>
</dbReference>
<dbReference type="SMR" id="Q7TYM1"/>
<dbReference type="KEGG" id="mbo:BQ2027_MB2444C"/>
<dbReference type="PATRIC" id="fig|233413.5.peg.2690"/>
<dbReference type="UniPathway" id="UPA00253">
    <property type="reaction ID" value="UER00332"/>
</dbReference>
<dbReference type="Proteomes" id="UP000001419">
    <property type="component" value="Chromosome"/>
</dbReference>
<dbReference type="GO" id="GO:0005524">
    <property type="term" value="F:ATP binding"/>
    <property type="evidence" value="ECO:0007669"/>
    <property type="project" value="UniProtKB-KW"/>
</dbReference>
<dbReference type="GO" id="GO:0004515">
    <property type="term" value="F:nicotinate-nucleotide adenylyltransferase activity"/>
    <property type="evidence" value="ECO:0007669"/>
    <property type="project" value="UniProtKB-UniRule"/>
</dbReference>
<dbReference type="GO" id="GO:0009435">
    <property type="term" value="P:NAD biosynthetic process"/>
    <property type="evidence" value="ECO:0007669"/>
    <property type="project" value="UniProtKB-UniRule"/>
</dbReference>
<dbReference type="CDD" id="cd02165">
    <property type="entry name" value="NMNAT"/>
    <property type="match status" value="1"/>
</dbReference>
<dbReference type="FunFam" id="3.40.50.620:FF:000039">
    <property type="entry name" value="Probable nicotinate-nucleotide adenylyltransferase"/>
    <property type="match status" value="1"/>
</dbReference>
<dbReference type="Gene3D" id="3.40.50.620">
    <property type="entry name" value="HUPs"/>
    <property type="match status" value="1"/>
</dbReference>
<dbReference type="HAMAP" id="MF_00244">
    <property type="entry name" value="NaMN_adenylyltr"/>
    <property type="match status" value="1"/>
</dbReference>
<dbReference type="InterPro" id="IPR004821">
    <property type="entry name" value="Cyt_trans-like"/>
</dbReference>
<dbReference type="InterPro" id="IPR005248">
    <property type="entry name" value="NadD/NMNAT"/>
</dbReference>
<dbReference type="InterPro" id="IPR014729">
    <property type="entry name" value="Rossmann-like_a/b/a_fold"/>
</dbReference>
<dbReference type="NCBIfam" id="TIGR00125">
    <property type="entry name" value="cyt_tran_rel"/>
    <property type="match status" value="1"/>
</dbReference>
<dbReference type="NCBIfam" id="TIGR00482">
    <property type="entry name" value="nicotinate (nicotinamide) nucleotide adenylyltransferase"/>
    <property type="match status" value="1"/>
</dbReference>
<dbReference type="NCBIfam" id="NF000840">
    <property type="entry name" value="PRK00071.1-3"/>
    <property type="match status" value="1"/>
</dbReference>
<dbReference type="PANTHER" id="PTHR39321">
    <property type="entry name" value="NICOTINATE-NUCLEOTIDE ADENYLYLTRANSFERASE-RELATED"/>
    <property type="match status" value="1"/>
</dbReference>
<dbReference type="PANTHER" id="PTHR39321:SF3">
    <property type="entry name" value="PHOSPHOPANTETHEINE ADENYLYLTRANSFERASE"/>
    <property type="match status" value="1"/>
</dbReference>
<dbReference type="Pfam" id="PF01467">
    <property type="entry name" value="CTP_transf_like"/>
    <property type="match status" value="1"/>
</dbReference>
<dbReference type="SUPFAM" id="SSF52374">
    <property type="entry name" value="Nucleotidylyl transferase"/>
    <property type="match status" value="1"/>
</dbReference>
<feature type="chain" id="PRO_0000181425" description="Probable nicotinate-nucleotide adenylyltransferase">
    <location>
        <begin position="1"/>
        <end position="214"/>
    </location>
</feature>
<protein>
    <recommendedName>
        <fullName evidence="2">Probable nicotinate-nucleotide adenylyltransferase</fullName>
        <ecNumber evidence="2">2.7.7.18</ecNumber>
    </recommendedName>
    <alternativeName>
        <fullName evidence="2">Deamido-NAD(+) diphosphorylase</fullName>
    </alternativeName>
    <alternativeName>
        <fullName evidence="2">Deamido-NAD(+) pyrophosphorylase</fullName>
    </alternativeName>
    <alternativeName>
        <fullName evidence="2">Nicotinate mononucleotide adenylyltransferase</fullName>
        <shortName evidence="2">NaMN adenylyltransferase</shortName>
    </alternativeName>
</protein>
<proteinExistence type="inferred from homology"/>
<evidence type="ECO:0000250" key="1">
    <source>
        <dbReference type="UniProtKB" id="P9WJJ5"/>
    </source>
</evidence>
<evidence type="ECO:0000255" key="2">
    <source>
        <dbReference type="HAMAP-Rule" id="MF_00244"/>
    </source>
</evidence>